<accession>Q7V436</accession>
<sequence length="427" mass="44318">MALVEDVFSLSPKAVSSALASLWRPIQGGVSAPLGFQAAGITAGLKDSGKPDLALLLAPEGAVCAGMFTTSLVRAACVDLCVDHLQACGGKARAVLINSGQANACTGERGWLDSLRASQALAGRLELPVEQVLICSTGVIGVPIPMDTLLAGLDPLVEALSDEGGAEAAGAILTTDLVEKQFALEAELGGRSVRIGGMAKGSGMIHPDMATMLGYLSCDVGVEVDAWQAMLKRVVDCSFNAMTVDGDTSTNDSCLAFAAGELLEQEHLQALEAGLLVAAQQLAKAIARDGEGATCLLEVQVEGVVGDVEARRIARTVCGSSLVKTAVHGRDPNWGRIVAAAGCAGVPFDPAAVALWLGPHQLMEFGEPLPFDRLAASRYMQERVDGSYLCDDTVQIRLVVGDGSGDGMAWGCDLSDQYVRINADYTT</sequence>
<protein>
    <recommendedName>
        <fullName evidence="1">Arginine biosynthesis bifunctional protein ArgJ</fullName>
    </recommendedName>
    <domain>
        <recommendedName>
            <fullName evidence="1">Glutamate N-acetyltransferase</fullName>
            <ecNumber evidence="1">2.3.1.35</ecNumber>
        </recommendedName>
        <alternativeName>
            <fullName evidence="1">Ornithine acetyltransferase</fullName>
            <shortName evidence="1">OATase</shortName>
        </alternativeName>
        <alternativeName>
            <fullName evidence="1">Ornithine transacetylase</fullName>
        </alternativeName>
    </domain>
    <domain>
        <recommendedName>
            <fullName evidence="1">Amino-acid acetyltransferase</fullName>
            <ecNumber evidence="1">2.3.1.1</ecNumber>
        </recommendedName>
        <alternativeName>
            <fullName evidence="1">N-acetylglutamate synthase</fullName>
            <shortName evidence="1">AGSase</shortName>
        </alternativeName>
    </domain>
    <component>
        <recommendedName>
            <fullName evidence="1">Arginine biosynthesis bifunctional protein ArgJ alpha chain</fullName>
        </recommendedName>
    </component>
    <component>
        <recommendedName>
            <fullName evidence="1">Arginine biosynthesis bifunctional protein ArgJ beta chain</fullName>
        </recommendedName>
    </component>
</protein>
<gene>
    <name evidence="1" type="primary">argJ</name>
    <name type="ordered locus">PMT_2135</name>
</gene>
<dbReference type="EC" id="2.3.1.35" evidence="1"/>
<dbReference type="EC" id="2.3.1.1" evidence="1"/>
<dbReference type="EMBL" id="BX548175">
    <property type="protein sequence ID" value="CAE22309.1"/>
    <property type="molecule type" value="Genomic_DNA"/>
</dbReference>
<dbReference type="RefSeq" id="WP_011131499.1">
    <property type="nucleotide sequence ID" value="NC_005071.1"/>
</dbReference>
<dbReference type="SMR" id="Q7V436"/>
<dbReference type="MEROPS" id="T05.002"/>
<dbReference type="KEGG" id="pmt:PMT_2135"/>
<dbReference type="eggNOG" id="COG1364">
    <property type="taxonomic scope" value="Bacteria"/>
</dbReference>
<dbReference type="HOGENOM" id="CLU_027172_1_1_3"/>
<dbReference type="OrthoDB" id="9804242at2"/>
<dbReference type="UniPathway" id="UPA00068">
    <property type="reaction ID" value="UER00106"/>
</dbReference>
<dbReference type="UniPathway" id="UPA00068">
    <property type="reaction ID" value="UER00111"/>
</dbReference>
<dbReference type="Proteomes" id="UP000001423">
    <property type="component" value="Chromosome"/>
</dbReference>
<dbReference type="GO" id="GO:0005737">
    <property type="term" value="C:cytoplasm"/>
    <property type="evidence" value="ECO:0007669"/>
    <property type="project" value="UniProtKB-SubCell"/>
</dbReference>
<dbReference type="GO" id="GO:0004358">
    <property type="term" value="F:glutamate N-acetyltransferase activity"/>
    <property type="evidence" value="ECO:0007669"/>
    <property type="project" value="UniProtKB-UniRule"/>
</dbReference>
<dbReference type="GO" id="GO:0004042">
    <property type="term" value="F:L-glutamate N-acetyltransferase activity"/>
    <property type="evidence" value="ECO:0007669"/>
    <property type="project" value="UniProtKB-UniRule"/>
</dbReference>
<dbReference type="GO" id="GO:0006526">
    <property type="term" value="P:L-arginine biosynthetic process"/>
    <property type="evidence" value="ECO:0007669"/>
    <property type="project" value="UniProtKB-UniRule"/>
</dbReference>
<dbReference type="GO" id="GO:0006592">
    <property type="term" value="P:ornithine biosynthetic process"/>
    <property type="evidence" value="ECO:0007669"/>
    <property type="project" value="TreeGrafter"/>
</dbReference>
<dbReference type="CDD" id="cd02152">
    <property type="entry name" value="OAT"/>
    <property type="match status" value="1"/>
</dbReference>
<dbReference type="FunFam" id="3.10.20.340:FF:000001">
    <property type="entry name" value="Arginine biosynthesis bifunctional protein ArgJ, chloroplastic"/>
    <property type="match status" value="1"/>
</dbReference>
<dbReference type="FunFam" id="3.60.70.12:FF:000001">
    <property type="entry name" value="Arginine biosynthesis bifunctional protein ArgJ, chloroplastic"/>
    <property type="match status" value="1"/>
</dbReference>
<dbReference type="Gene3D" id="3.10.20.340">
    <property type="entry name" value="ArgJ beta chain, C-terminal domain"/>
    <property type="match status" value="1"/>
</dbReference>
<dbReference type="Gene3D" id="3.60.70.12">
    <property type="entry name" value="L-amino peptidase D-ALA esterase/amidase"/>
    <property type="match status" value="1"/>
</dbReference>
<dbReference type="HAMAP" id="MF_01106">
    <property type="entry name" value="ArgJ"/>
    <property type="match status" value="1"/>
</dbReference>
<dbReference type="InterPro" id="IPR002813">
    <property type="entry name" value="Arg_biosynth_ArgJ"/>
</dbReference>
<dbReference type="InterPro" id="IPR016117">
    <property type="entry name" value="ArgJ-like_dom_sf"/>
</dbReference>
<dbReference type="InterPro" id="IPR042195">
    <property type="entry name" value="ArgJ_beta_C"/>
</dbReference>
<dbReference type="NCBIfam" id="TIGR00120">
    <property type="entry name" value="ArgJ"/>
    <property type="match status" value="1"/>
</dbReference>
<dbReference type="NCBIfam" id="NF003802">
    <property type="entry name" value="PRK05388.1"/>
    <property type="match status" value="1"/>
</dbReference>
<dbReference type="PANTHER" id="PTHR23100">
    <property type="entry name" value="ARGININE BIOSYNTHESIS BIFUNCTIONAL PROTEIN ARGJ"/>
    <property type="match status" value="1"/>
</dbReference>
<dbReference type="PANTHER" id="PTHR23100:SF0">
    <property type="entry name" value="ARGININE BIOSYNTHESIS BIFUNCTIONAL PROTEIN ARGJ, MITOCHONDRIAL"/>
    <property type="match status" value="1"/>
</dbReference>
<dbReference type="Pfam" id="PF01960">
    <property type="entry name" value="ArgJ"/>
    <property type="match status" value="1"/>
</dbReference>
<dbReference type="SUPFAM" id="SSF56266">
    <property type="entry name" value="DmpA/ArgJ-like"/>
    <property type="match status" value="1"/>
</dbReference>
<organism>
    <name type="scientific">Prochlorococcus marinus (strain MIT 9313)</name>
    <dbReference type="NCBI Taxonomy" id="74547"/>
    <lineage>
        <taxon>Bacteria</taxon>
        <taxon>Bacillati</taxon>
        <taxon>Cyanobacteriota</taxon>
        <taxon>Cyanophyceae</taxon>
        <taxon>Synechococcales</taxon>
        <taxon>Prochlorococcaceae</taxon>
        <taxon>Prochlorococcus</taxon>
    </lineage>
</organism>
<keyword id="KW-0012">Acyltransferase</keyword>
<keyword id="KW-0028">Amino-acid biosynthesis</keyword>
<keyword id="KW-0055">Arginine biosynthesis</keyword>
<keyword id="KW-0068">Autocatalytic cleavage</keyword>
<keyword id="KW-0963">Cytoplasm</keyword>
<keyword id="KW-0511">Multifunctional enzyme</keyword>
<keyword id="KW-1185">Reference proteome</keyword>
<keyword id="KW-0808">Transferase</keyword>
<name>ARGJ_PROMM</name>
<evidence type="ECO:0000255" key="1">
    <source>
        <dbReference type="HAMAP-Rule" id="MF_01106"/>
    </source>
</evidence>
<reference key="1">
    <citation type="journal article" date="2003" name="Nature">
        <title>Genome divergence in two Prochlorococcus ecotypes reflects oceanic niche differentiation.</title>
        <authorList>
            <person name="Rocap G."/>
            <person name="Larimer F.W."/>
            <person name="Lamerdin J.E."/>
            <person name="Malfatti S."/>
            <person name="Chain P."/>
            <person name="Ahlgren N.A."/>
            <person name="Arellano A."/>
            <person name="Coleman M."/>
            <person name="Hauser L."/>
            <person name="Hess W.R."/>
            <person name="Johnson Z.I."/>
            <person name="Land M.L."/>
            <person name="Lindell D."/>
            <person name="Post A.F."/>
            <person name="Regala W."/>
            <person name="Shah M."/>
            <person name="Shaw S.L."/>
            <person name="Steglich C."/>
            <person name="Sullivan M.B."/>
            <person name="Ting C.S."/>
            <person name="Tolonen A."/>
            <person name="Webb E.A."/>
            <person name="Zinser E.R."/>
            <person name="Chisholm S.W."/>
        </authorList>
    </citation>
    <scope>NUCLEOTIDE SEQUENCE [LARGE SCALE GENOMIC DNA]</scope>
    <source>
        <strain>MIT 9313</strain>
    </source>
</reference>
<proteinExistence type="inferred from homology"/>
<feature type="chain" id="PRO_0000002209" description="Arginine biosynthesis bifunctional protein ArgJ alpha chain" evidence="1">
    <location>
        <begin position="1"/>
        <end position="210"/>
    </location>
</feature>
<feature type="chain" id="PRO_0000002210" description="Arginine biosynthesis bifunctional protein ArgJ beta chain" evidence="1">
    <location>
        <begin position="211"/>
        <end position="427"/>
    </location>
</feature>
<feature type="active site" description="Nucleophile" evidence="1">
    <location>
        <position position="211"/>
    </location>
</feature>
<feature type="binding site" evidence="1">
    <location>
        <position position="174"/>
    </location>
    <ligand>
        <name>substrate</name>
    </ligand>
</feature>
<feature type="binding site" evidence="1">
    <location>
        <position position="200"/>
    </location>
    <ligand>
        <name>substrate</name>
    </ligand>
</feature>
<feature type="binding site" evidence="1">
    <location>
        <position position="211"/>
    </location>
    <ligand>
        <name>substrate</name>
    </ligand>
</feature>
<feature type="binding site" evidence="1">
    <location>
        <position position="291"/>
    </location>
    <ligand>
        <name>substrate</name>
    </ligand>
</feature>
<feature type="binding site" evidence="1">
    <location>
        <position position="422"/>
    </location>
    <ligand>
        <name>substrate</name>
    </ligand>
</feature>
<feature type="binding site" evidence="1">
    <location>
        <position position="427"/>
    </location>
    <ligand>
        <name>substrate</name>
    </ligand>
</feature>
<feature type="site" description="Involved in the stabilization of negative charge on the oxyanion by the formation of the oxyanion hole" evidence="1">
    <location>
        <position position="137"/>
    </location>
</feature>
<feature type="site" description="Involved in the stabilization of negative charge on the oxyanion by the formation of the oxyanion hole" evidence="1">
    <location>
        <position position="138"/>
    </location>
</feature>
<feature type="site" description="Cleavage; by autolysis" evidence="1">
    <location>
        <begin position="210"/>
        <end position="211"/>
    </location>
</feature>
<comment type="function">
    <text evidence="1">Catalyzes two activities which are involved in the cyclic version of arginine biosynthesis: the synthesis of N-acetylglutamate from glutamate and acetyl-CoA as the acetyl donor, and of ornithine by transacetylation between N(2)-acetylornithine and glutamate.</text>
</comment>
<comment type="catalytic activity">
    <reaction evidence="1">
        <text>N(2)-acetyl-L-ornithine + L-glutamate = N-acetyl-L-glutamate + L-ornithine</text>
        <dbReference type="Rhea" id="RHEA:15349"/>
        <dbReference type="ChEBI" id="CHEBI:29985"/>
        <dbReference type="ChEBI" id="CHEBI:44337"/>
        <dbReference type="ChEBI" id="CHEBI:46911"/>
        <dbReference type="ChEBI" id="CHEBI:57805"/>
        <dbReference type="EC" id="2.3.1.35"/>
    </reaction>
</comment>
<comment type="catalytic activity">
    <reaction evidence="1">
        <text>L-glutamate + acetyl-CoA = N-acetyl-L-glutamate + CoA + H(+)</text>
        <dbReference type="Rhea" id="RHEA:24292"/>
        <dbReference type="ChEBI" id="CHEBI:15378"/>
        <dbReference type="ChEBI" id="CHEBI:29985"/>
        <dbReference type="ChEBI" id="CHEBI:44337"/>
        <dbReference type="ChEBI" id="CHEBI:57287"/>
        <dbReference type="ChEBI" id="CHEBI:57288"/>
        <dbReference type="EC" id="2.3.1.1"/>
    </reaction>
</comment>
<comment type="pathway">
    <text evidence="1">Amino-acid biosynthesis; L-arginine biosynthesis; L-ornithine and N-acetyl-L-glutamate from L-glutamate and N(2)-acetyl-L-ornithine (cyclic): step 1/1.</text>
</comment>
<comment type="pathway">
    <text evidence="1">Amino-acid biosynthesis; L-arginine biosynthesis; N(2)-acetyl-L-ornithine from L-glutamate: step 1/4.</text>
</comment>
<comment type="subunit">
    <text evidence="1">Heterotetramer of two alpha and two beta chains.</text>
</comment>
<comment type="subcellular location">
    <subcellularLocation>
        <location evidence="1">Cytoplasm</location>
    </subcellularLocation>
</comment>
<comment type="similarity">
    <text evidence="1">Belongs to the ArgJ family.</text>
</comment>